<accession>Q8TU01</accession>
<proteinExistence type="inferred from homology"/>
<dbReference type="EC" id="7.2.1.4" evidence="1"/>
<dbReference type="EMBL" id="AE010299">
    <property type="protein sequence ID" value="AAM03727.1"/>
    <property type="molecule type" value="Genomic_DNA"/>
</dbReference>
<dbReference type="RefSeq" id="WP_011020332.1">
    <property type="nucleotide sequence ID" value="NC_003552.1"/>
</dbReference>
<dbReference type="SMR" id="Q8TU01"/>
<dbReference type="FunCoup" id="Q8TU01">
    <property type="interactions" value="72"/>
</dbReference>
<dbReference type="STRING" id="188937.MA_0274"/>
<dbReference type="EnsemblBacteria" id="AAM03727">
    <property type="protein sequence ID" value="AAM03727"/>
    <property type="gene ID" value="MA_0274"/>
</dbReference>
<dbReference type="GeneID" id="1472166"/>
<dbReference type="KEGG" id="mac:MA_0274"/>
<dbReference type="HOGENOM" id="CLU_092286_0_0_2"/>
<dbReference type="InParanoid" id="Q8TU01"/>
<dbReference type="OrthoDB" id="60591at2157"/>
<dbReference type="PhylomeDB" id="Q8TU01"/>
<dbReference type="UniPathway" id="UPA00640">
    <property type="reaction ID" value="UER00698"/>
</dbReference>
<dbReference type="Proteomes" id="UP000002487">
    <property type="component" value="Chromosome"/>
</dbReference>
<dbReference type="GO" id="GO:0005886">
    <property type="term" value="C:plasma membrane"/>
    <property type="evidence" value="ECO:0007669"/>
    <property type="project" value="UniProtKB-SubCell"/>
</dbReference>
<dbReference type="GO" id="GO:0030269">
    <property type="term" value="F:tetrahydromethanopterin S-methyltransferase activity"/>
    <property type="evidence" value="ECO:0007669"/>
    <property type="project" value="UniProtKB-UniRule"/>
</dbReference>
<dbReference type="GO" id="GO:0019386">
    <property type="term" value="P:methanogenesis, from carbon dioxide"/>
    <property type="evidence" value="ECO:0007669"/>
    <property type="project" value="UniProtKB-UniRule"/>
</dbReference>
<dbReference type="GO" id="GO:0032259">
    <property type="term" value="P:methylation"/>
    <property type="evidence" value="ECO:0007669"/>
    <property type="project" value="UniProtKB-KW"/>
</dbReference>
<dbReference type="GO" id="GO:0006730">
    <property type="term" value="P:one-carbon metabolic process"/>
    <property type="evidence" value="ECO:0007669"/>
    <property type="project" value="UniProtKB-UniRule"/>
</dbReference>
<dbReference type="HAMAP" id="MF_01096">
    <property type="entry name" value="MtrC"/>
    <property type="match status" value="1"/>
</dbReference>
<dbReference type="InterPro" id="IPR005865">
    <property type="entry name" value="THM_MeTrfase_su_C"/>
</dbReference>
<dbReference type="NCBIfam" id="TIGR01148">
    <property type="entry name" value="mtrC"/>
    <property type="match status" value="1"/>
</dbReference>
<dbReference type="Pfam" id="PF04211">
    <property type="entry name" value="MtrC"/>
    <property type="match status" value="1"/>
</dbReference>
<dbReference type="PIRSF" id="PIRSF006530">
    <property type="entry name" value="MtrC"/>
    <property type="match status" value="1"/>
</dbReference>
<reference key="1">
    <citation type="journal article" date="2002" name="Genome Res.">
        <title>The genome of Methanosarcina acetivorans reveals extensive metabolic and physiological diversity.</title>
        <authorList>
            <person name="Galagan J.E."/>
            <person name="Nusbaum C."/>
            <person name="Roy A."/>
            <person name="Endrizzi M.G."/>
            <person name="Macdonald P."/>
            <person name="FitzHugh W."/>
            <person name="Calvo S."/>
            <person name="Engels R."/>
            <person name="Smirnov S."/>
            <person name="Atnoor D."/>
            <person name="Brown A."/>
            <person name="Allen N."/>
            <person name="Naylor J."/>
            <person name="Stange-Thomann N."/>
            <person name="DeArellano K."/>
            <person name="Johnson R."/>
            <person name="Linton L."/>
            <person name="McEwan P."/>
            <person name="McKernan K."/>
            <person name="Talamas J."/>
            <person name="Tirrell A."/>
            <person name="Ye W."/>
            <person name="Zimmer A."/>
            <person name="Barber R.D."/>
            <person name="Cann I."/>
            <person name="Graham D.E."/>
            <person name="Grahame D.A."/>
            <person name="Guss A.M."/>
            <person name="Hedderich R."/>
            <person name="Ingram-Smith C."/>
            <person name="Kuettner H.C."/>
            <person name="Krzycki J.A."/>
            <person name="Leigh J.A."/>
            <person name="Li W."/>
            <person name="Liu J."/>
            <person name="Mukhopadhyay B."/>
            <person name="Reeve J.N."/>
            <person name="Smith K."/>
            <person name="Springer T.A."/>
            <person name="Umayam L.A."/>
            <person name="White O."/>
            <person name="White R.H."/>
            <person name="de Macario E.C."/>
            <person name="Ferry J.G."/>
            <person name="Jarrell K.F."/>
            <person name="Jing H."/>
            <person name="Macario A.J.L."/>
            <person name="Paulsen I.T."/>
            <person name="Pritchett M."/>
            <person name="Sowers K.R."/>
            <person name="Swanson R.V."/>
            <person name="Zinder S.H."/>
            <person name="Lander E."/>
            <person name="Metcalf W.W."/>
            <person name="Birren B."/>
        </authorList>
    </citation>
    <scope>NUCLEOTIDE SEQUENCE [LARGE SCALE GENOMIC DNA]</scope>
    <source>
        <strain>ATCC 35395 / DSM 2834 / JCM 12185 / C2A</strain>
    </source>
</reference>
<protein>
    <recommendedName>
        <fullName evidence="1">Tetrahydromethanopterin S-methyltransferase subunit C</fullName>
        <ecNumber evidence="1">7.2.1.4</ecNumber>
    </recommendedName>
    <alternativeName>
        <fullName evidence="1">N5-methyltetrahydromethanopterin--coenzyme M methyltransferase subunit C</fullName>
    </alternativeName>
</protein>
<organism>
    <name type="scientific">Methanosarcina acetivorans (strain ATCC 35395 / DSM 2834 / JCM 12185 / C2A)</name>
    <dbReference type="NCBI Taxonomy" id="188937"/>
    <lineage>
        <taxon>Archaea</taxon>
        <taxon>Methanobacteriati</taxon>
        <taxon>Methanobacteriota</taxon>
        <taxon>Stenosarchaea group</taxon>
        <taxon>Methanomicrobia</taxon>
        <taxon>Methanosarcinales</taxon>
        <taxon>Methanosarcinaceae</taxon>
        <taxon>Methanosarcina</taxon>
    </lineage>
</organism>
<keyword id="KW-1003">Cell membrane</keyword>
<keyword id="KW-0472">Membrane</keyword>
<keyword id="KW-0484">Methanogenesis</keyword>
<keyword id="KW-0489">Methyltransferase</keyword>
<keyword id="KW-0554">One-carbon metabolism</keyword>
<keyword id="KW-1185">Reference proteome</keyword>
<keyword id="KW-0808">Transferase</keyword>
<keyword id="KW-1278">Translocase</keyword>
<keyword id="KW-0812">Transmembrane</keyword>
<keyword id="KW-1133">Transmembrane helix</keyword>
<comment type="function">
    <text evidence="1">Part of a complex that catalyzes the formation of methyl-coenzyme M and tetrahydromethanopterin from coenzyme M and methyl-tetrahydromethanopterin. This is an energy-conserving, sodium-ion translocating step.</text>
</comment>
<comment type="catalytic activity">
    <reaction evidence="1">
        <text>5-methyl-5,6,7,8-tetrahydromethanopterin + coenzyme M + 2 Na(+)(in) = 5,6,7,8-tetrahydromethanopterin + methyl-coenzyme M + 2 Na(+)(out)</text>
        <dbReference type="Rhea" id="RHEA:53492"/>
        <dbReference type="ChEBI" id="CHEBI:29101"/>
        <dbReference type="ChEBI" id="CHEBI:58103"/>
        <dbReference type="ChEBI" id="CHEBI:58116"/>
        <dbReference type="ChEBI" id="CHEBI:58286"/>
        <dbReference type="ChEBI" id="CHEBI:58319"/>
        <dbReference type="EC" id="7.2.1.4"/>
    </reaction>
</comment>
<comment type="pathway">
    <text evidence="1">One-carbon metabolism; methanogenesis from CO(2); methyl-coenzyme M from 5,10-methylene-5,6,7,8-tetrahydromethanopterin: step 2/2.</text>
</comment>
<comment type="subunit">
    <text evidence="1">The complex is composed of 8 subunits; MtrA, MtrB, MtrC, MtrD, MtrE, MtrF, MtrG and MtrH.</text>
</comment>
<comment type="subcellular location">
    <subcellularLocation>
        <location evidence="1">Cell membrane</location>
        <topology evidence="1">Multi-pass membrane protein</topology>
    </subcellularLocation>
</comment>
<comment type="similarity">
    <text evidence="1">Belongs to the MtrC family.</text>
</comment>
<evidence type="ECO:0000255" key="1">
    <source>
        <dbReference type="HAMAP-Rule" id="MF_01096"/>
    </source>
</evidence>
<sequence length="267" mass="26950">MSAGGAGGEAKGGFPPQTIMAIGAIGGLAGIYLGNFMPAQFSFFGGLGAICAMVWGADAVRRVASYGLGTGVPSIGMISLGMGIVAALFGLSVGGIAGPIVSFIAAAIIGAVIGVLANKVIGMGIPIMEQAMVEIAGAGTLVIIGLSVVIAGTFDYAEVVEYVVANGYIALIFIIGGMGILHPFNANLGPDEKQDRTLSVAVEKAAIALIITGFASSLHEGLMAAGLNIAVGVIIWAWAFMKYYGYVKRDSYAVVGTGLLPSAEELE</sequence>
<feature type="chain" id="PRO_0000147520" description="Tetrahydromethanopterin S-methyltransferase subunit C">
    <location>
        <begin position="1"/>
        <end position="267"/>
    </location>
</feature>
<feature type="transmembrane region" description="Helical" evidence="1">
    <location>
        <begin position="19"/>
        <end position="39"/>
    </location>
</feature>
<feature type="transmembrane region" description="Helical" evidence="1">
    <location>
        <begin position="40"/>
        <end position="60"/>
    </location>
</feature>
<feature type="transmembrane region" description="Helical" evidence="1">
    <location>
        <begin position="75"/>
        <end position="95"/>
    </location>
</feature>
<feature type="transmembrane region" description="Helical" evidence="1">
    <location>
        <begin position="96"/>
        <end position="116"/>
    </location>
</feature>
<feature type="transmembrane region" description="Helical" evidence="1">
    <location>
        <begin position="131"/>
        <end position="151"/>
    </location>
</feature>
<feature type="transmembrane region" description="Helical" evidence="1">
    <location>
        <begin position="162"/>
        <end position="182"/>
    </location>
</feature>
<feature type="transmembrane region" description="Helical" evidence="1">
    <location>
        <begin position="221"/>
        <end position="241"/>
    </location>
</feature>
<name>MTRC_METAC</name>
<gene>
    <name evidence="1" type="primary">mtrC</name>
    <name type="ordered locus">MA_0274</name>
</gene>